<gene>
    <name evidence="1" type="primary">smpB</name>
    <name type="ordered locus">ESA_00635</name>
</gene>
<feature type="chain" id="PRO_1000002053" description="SsrA-binding protein">
    <location>
        <begin position="1"/>
        <end position="160"/>
    </location>
</feature>
<organism>
    <name type="scientific">Cronobacter sakazakii (strain ATCC BAA-894)</name>
    <name type="common">Enterobacter sakazakii</name>
    <dbReference type="NCBI Taxonomy" id="290339"/>
    <lineage>
        <taxon>Bacteria</taxon>
        <taxon>Pseudomonadati</taxon>
        <taxon>Pseudomonadota</taxon>
        <taxon>Gammaproteobacteria</taxon>
        <taxon>Enterobacterales</taxon>
        <taxon>Enterobacteriaceae</taxon>
        <taxon>Cronobacter</taxon>
    </lineage>
</organism>
<reference key="1">
    <citation type="journal article" date="2010" name="PLoS ONE">
        <title>Genome sequence of Cronobacter sakazakii BAA-894 and comparative genomic hybridization analysis with other Cronobacter species.</title>
        <authorList>
            <person name="Kucerova E."/>
            <person name="Clifton S.W."/>
            <person name="Xia X.Q."/>
            <person name="Long F."/>
            <person name="Porwollik S."/>
            <person name="Fulton L."/>
            <person name="Fronick C."/>
            <person name="Minx P."/>
            <person name="Kyung K."/>
            <person name="Warren W."/>
            <person name="Fulton R."/>
            <person name="Feng D."/>
            <person name="Wollam A."/>
            <person name="Shah N."/>
            <person name="Bhonagiri V."/>
            <person name="Nash W.E."/>
            <person name="Hallsworth-Pepin K."/>
            <person name="Wilson R.K."/>
            <person name="McClelland M."/>
            <person name="Forsythe S.J."/>
        </authorList>
    </citation>
    <scope>NUCLEOTIDE SEQUENCE [LARGE SCALE GENOMIC DNA]</scope>
    <source>
        <strain>ATCC BAA-894</strain>
    </source>
</reference>
<dbReference type="EMBL" id="CP000783">
    <property type="protein sequence ID" value="ABU75918.1"/>
    <property type="molecule type" value="Genomic_DNA"/>
</dbReference>
<dbReference type="RefSeq" id="WP_004387953.1">
    <property type="nucleotide sequence ID" value="NC_009778.1"/>
</dbReference>
<dbReference type="SMR" id="A7MHX6"/>
<dbReference type="GeneID" id="45714482"/>
<dbReference type="KEGG" id="esa:ESA_00635"/>
<dbReference type="HOGENOM" id="CLU_108953_3_0_6"/>
<dbReference type="Proteomes" id="UP000000260">
    <property type="component" value="Chromosome"/>
</dbReference>
<dbReference type="GO" id="GO:0005829">
    <property type="term" value="C:cytosol"/>
    <property type="evidence" value="ECO:0007669"/>
    <property type="project" value="TreeGrafter"/>
</dbReference>
<dbReference type="GO" id="GO:0003723">
    <property type="term" value="F:RNA binding"/>
    <property type="evidence" value="ECO:0007669"/>
    <property type="project" value="UniProtKB-UniRule"/>
</dbReference>
<dbReference type="GO" id="GO:0070929">
    <property type="term" value="P:trans-translation"/>
    <property type="evidence" value="ECO:0007669"/>
    <property type="project" value="UniProtKB-UniRule"/>
</dbReference>
<dbReference type="CDD" id="cd09294">
    <property type="entry name" value="SmpB"/>
    <property type="match status" value="1"/>
</dbReference>
<dbReference type="FunFam" id="2.40.280.10:FF:000001">
    <property type="entry name" value="SsrA-binding protein"/>
    <property type="match status" value="1"/>
</dbReference>
<dbReference type="Gene3D" id="2.40.280.10">
    <property type="match status" value="1"/>
</dbReference>
<dbReference type="HAMAP" id="MF_00023">
    <property type="entry name" value="SmpB"/>
    <property type="match status" value="1"/>
</dbReference>
<dbReference type="InterPro" id="IPR023620">
    <property type="entry name" value="SmpB"/>
</dbReference>
<dbReference type="InterPro" id="IPR000037">
    <property type="entry name" value="SsrA-bd_prot"/>
</dbReference>
<dbReference type="InterPro" id="IPR020081">
    <property type="entry name" value="SsrA-bd_prot_CS"/>
</dbReference>
<dbReference type="NCBIfam" id="NF003843">
    <property type="entry name" value="PRK05422.1"/>
    <property type="match status" value="1"/>
</dbReference>
<dbReference type="NCBIfam" id="TIGR00086">
    <property type="entry name" value="smpB"/>
    <property type="match status" value="1"/>
</dbReference>
<dbReference type="PANTHER" id="PTHR30308:SF2">
    <property type="entry name" value="SSRA-BINDING PROTEIN"/>
    <property type="match status" value="1"/>
</dbReference>
<dbReference type="PANTHER" id="PTHR30308">
    <property type="entry name" value="TMRNA-BINDING COMPONENT OF TRANS-TRANSLATION TAGGING COMPLEX"/>
    <property type="match status" value="1"/>
</dbReference>
<dbReference type="Pfam" id="PF01668">
    <property type="entry name" value="SmpB"/>
    <property type="match status" value="1"/>
</dbReference>
<dbReference type="SUPFAM" id="SSF74982">
    <property type="entry name" value="Small protein B (SmpB)"/>
    <property type="match status" value="1"/>
</dbReference>
<dbReference type="PROSITE" id="PS01317">
    <property type="entry name" value="SSRP"/>
    <property type="match status" value="1"/>
</dbReference>
<accession>A7MHX6</accession>
<protein>
    <recommendedName>
        <fullName evidence="1">SsrA-binding protein</fullName>
    </recommendedName>
    <alternativeName>
        <fullName evidence="1">Small protein B</fullName>
    </alternativeName>
</protein>
<proteinExistence type="inferred from homology"/>
<evidence type="ECO:0000255" key="1">
    <source>
        <dbReference type="HAMAP-Rule" id="MF_00023"/>
    </source>
</evidence>
<sequence>MTKKKAHKPGSATIALNKRARHEYFIEEEFEAGLALQGWEVKSLRAGKANIGDSYVILKDGEAYLFGANFQPLNVASTHVVCDPTRTRKLLLNQRELDNLYGRINRDGYTVVALSLYWKNAWCKVKIGVAKGKKQHDKRSDLKEREWQLDKARIMKNAGR</sequence>
<name>SSRP_CROS8</name>
<comment type="function">
    <text evidence="1">Required for rescue of stalled ribosomes mediated by trans-translation. Binds to transfer-messenger RNA (tmRNA), required for stable association of tmRNA with ribosomes. tmRNA and SmpB together mimic tRNA shape, replacing the anticodon stem-loop with SmpB. tmRNA is encoded by the ssrA gene; the 2 termini fold to resemble tRNA(Ala) and it encodes a 'tag peptide', a short internal open reading frame. During trans-translation Ala-aminoacylated tmRNA acts like a tRNA, entering the A-site of stalled ribosomes, displacing the stalled mRNA. The ribosome then switches to translate the ORF on the tmRNA; the nascent peptide is terminated with the 'tag peptide' encoded by the tmRNA and targeted for degradation. The ribosome is freed to recommence translation, which seems to be the essential function of trans-translation.</text>
</comment>
<comment type="subcellular location">
    <subcellularLocation>
        <location evidence="1">Cytoplasm</location>
    </subcellularLocation>
    <text evidence="1">The tmRNA-SmpB complex associates with stalled 70S ribosomes.</text>
</comment>
<comment type="similarity">
    <text evidence="1">Belongs to the SmpB family.</text>
</comment>
<keyword id="KW-0963">Cytoplasm</keyword>
<keyword id="KW-1185">Reference proteome</keyword>
<keyword id="KW-0694">RNA-binding</keyword>